<evidence type="ECO:0000250" key="1"/>
<evidence type="ECO:0000269" key="2">
    <source>
    </source>
</evidence>
<evidence type="ECO:0000305" key="3"/>
<reference key="1">
    <citation type="submission" date="2004-02" db="EMBL/GenBank/DDBJ databases">
        <title>Analysis and comparison of biosynthetic gene clusters for the 2-deoxy-inosamine containing aminoglycoside antibiotics ribostamycin, neomycin, lividomycin, paromomycin and butirosin.</title>
        <authorList>
            <person name="Aboshanab K.M.A."/>
            <person name="Schmidt-Beissner H."/>
            <person name="Wehmeier U.F."/>
            <person name="Piepersberg W."/>
            <person name="Welzel K."/>
            <person name="Vente A."/>
        </authorList>
    </citation>
    <scope>NUCLEOTIDE SEQUENCE [GENOMIC DNA]</scope>
    <source>
        <strain>ATCC 10745 / CBS 498.68 / DSM 40063 / JCM 4133 / NBRC 12773 / NCIMB 8233 / NRRL B-1195 / VKM Ac-150</strain>
    </source>
</reference>
<reference key="2">
    <citation type="submission" date="2004-07" db="EMBL/GenBank/DDBJ databases">
        <title>Cloning and characterization of a neomycin biosynthetic gene cluster from Streptomyces fradiae, ATCC 10745.</title>
        <authorList>
            <person name="Subba B."/>
            <person name="Kharel M.K."/>
            <person name="Sthapit B."/>
            <person name="Liou K."/>
            <person name="Lee H.C."/>
            <person name="Woo J.S."/>
            <person name="Sohng J.K."/>
        </authorList>
    </citation>
    <scope>NUCLEOTIDE SEQUENCE [GENOMIC DNA]</scope>
    <source>
        <strain>ATCC 10745 / CBS 498.68 / DSM 40063 / JCM 4133 / NBRC 12773 / NCIMB 8233 / NRRL B-1195 / VKM Ac-150</strain>
    </source>
</reference>
<reference key="3">
    <citation type="journal article" date="2005" name="J. Antibiot.">
        <title>Biosynthesis of 2-deoxystreptamine by three crucial enzymes in Streptomyces fradiae NBRC 12773.</title>
        <authorList>
            <person name="Kudo F."/>
            <person name="Yamamoto Y."/>
            <person name="Yokoyama K."/>
            <person name="Eguchi T."/>
            <person name="Kakinuma K."/>
        </authorList>
    </citation>
    <scope>NUCLEOTIDE SEQUENCE [GENOMIC DNA]</scope>
    <scope>FUNCTION</scope>
    <scope>CATALYTIC ACTIVITY</scope>
    <source>
        <strain>ATCC 10745 / CBS 498.68 / DSM 40063 / JCM 4133 / NBRC 12773 / NCIMB 8233 / NRRL B-1195 / VKM Ac-150</strain>
    </source>
</reference>
<reference key="4">
    <citation type="journal article" date="2005" name="Org. Biomol. Chem.">
        <title>The neomycin biosynthetic gene cluster of Streptomyces fradiae NCIMB 8233: characterisation of an aminotransferase involved in the formation of 2-deoxystreptamine.</title>
        <authorList>
            <person name="Huang F."/>
            <person name="Haydock S.F."/>
            <person name="Mironenko T."/>
            <person name="Spiteller D."/>
            <person name="Li Y."/>
            <person name="Spencer J.B."/>
        </authorList>
    </citation>
    <scope>NUCLEOTIDE SEQUENCE [GENOMIC DNA]</scope>
    <source>
        <strain>ATCC 10745 / CBS 498.68 / DSM 40063 / JCM 4133 / NBRC 12773 / NCIMB 8233 / NRRL B-1195 / VKM Ac-150</strain>
    </source>
</reference>
<organism>
    <name type="scientific">Streptomyces fradiae</name>
    <name type="common">Streptomyces roseoflavus</name>
    <dbReference type="NCBI Taxonomy" id="1906"/>
    <lineage>
        <taxon>Bacteria</taxon>
        <taxon>Bacillati</taxon>
        <taxon>Actinomycetota</taxon>
        <taxon>Actinomycetes</taxon>
        <taxon>Kitasatosporales</taxon>
        <taxon>Streptomycetaceae</taxon>
        <taxon>Streptomyces</taxon>
    </lineage>
</organism>
<sequence>MKALVFEAPERAVLTHRDIPAPAPGEALVRVAYNSVCGSDLSFYKGVWHGFTYPVVPGHEWSGSVVDVNGPRGADLVGRNVVGDLTCSCGTCAHCAAGTPTLCEDLGELGFTRDGACAEYMTVPVANLRPLPDTLPLRTACQVEPLAVALNAVDRLGVTPGEKVAVMGAGGIGLLLVQAVRLRGGTVTAVAEPVPERRAAALALGVPAAVGGDPGALVELTRSDPAAVPDVVLEASGYPTAVQEAVEAVRPGGRVGLVGYRIEEAAVMAPHHIVLKVLTVRASMGPGTRFEEAVDVLASGAVDVDALLSHEFALDDYAKALDVALRRADGNTRSYFNLRA</sequence>
<accession>Q53U21</accession>
<dbReference type="EC" id="1.1.1.329"/>
<dbReference type="EMBL" id="AJ629247">
    <property type="protein sequence ID" value="CAF33310.1"/>
    <property type="molecule type" value="Genomic_DNA"/>
</dbReference>
<dbReference type="EMBL" id="AJ786317">
    <property type="protein sequence ID" value="CAH05103.1"/>
    <property type="molecule type" value="Genomic_DNA"/>
</dbReference>
<dbReference type="EMBL" id="AB211959">
    <property type="protein sequence ID" value="BAD95818.1"/>
    <property type="molecule type" value="Genomic_DNA"/>
</dbReference>
<dbReference type="EMBL" id="AJ843080">
    <property type="protein sequence ID" value="CAH58688.1"/>
    <property type="molecule type" value="Genomic_DNA"/>
</dbReference>
<dbReference type="RefSeq" id="WP_031129625.1">
    <property type="nucleotide sequence ID" value="NZ_MUNC01000914.1"/>
</dbReference>
<dbReference type="SMR" id="Q53U21"/>
<dbReference type="GeneID" id="91406632"/>
<dbReference type="KEGG" id="ag:BAD95818"/>
<dbReference type="BioCyc" id="MetaCyc:MONOMER-17231"/>
<dbReference type="BRENDA" id="1.1.1.329">
    <property type="organism ID" value="5932"/>
</dbReference>
<dbReference type="UniPathway" id="UPA00907">
    <property type="reaction ID" value="UER00923"/>
</dbReference>
<dbReference type="UniPathway" id="UPA00969"/>
<dbReference type="GO" id="GO:0046872">
    <property type="term" value="F:metal ion binding"/>
    <property type="evidence" value="ECO:0007669"/>
    <property type="project" value="UniProtKB-KW"/>
</dbReference>
<dbReference type="GO" id="GO:0016491">
    <property type="term" value="F:oxidoreductase activity"/>
    <property type="evidence" value="ECO:0007669"/>
    <property type="project" value="UniProtKB-KW"/>
</dbReference>
<dbReference type="Gene3D" id="3.90.180.10">
    <property type="entry name" value="Medium-chain alcohol dehydrogenases, catalytic domain"/>
    <property type="match status" value="1"/>
</dbReference>
<dbReference type="Gene3D" id="3.40.50.720">
    <property type="entry name" value="NAD(P)-binding Rossmann-like Domain"/>
    <property type="match status" value="1"/>
</dbReference>
<dbReference type="InterPro" id="IPR013149">
    <property type="entry name" value="ADH-like_C"/>
</dbReference>
<dbReference type="InterPro" id="IPR013154">
    <property type="entry name" value="ADH-like_N"/>
</dbReference>
<dbReference type="InterPro" id="IPR011032">
    <property type="entry name" value="GroES-like_sf"/>
</dbReference>
<dbReference type="InterPro" id="IPR036291">
    <property type="entry name" value="NAD(P)-bd_dom_sf"/>
</dbReference>
<dbReference type="InterPro" id="IPR050129">
    <property type="entry name" value="Zn_alcohol_dh"/>
</dbReference>
<dbReference type="PANTHER" id="PTHR43401:SF5">
    <property type="entry name" value="ALCOHOL DEHYDROGENASE-RELATED"/>
    <property type="match status" value="1"/>
</dbReference>
<dbReference type="PANTHER" id="PTHR43401">
    <property type="entry name" value="L-THREONINE 3-DEHYDROGENASE"/>
    <property type="match status" value="1"/>
</dbReference>
<dbReference type="Pfam" id="PF08240">
    <property type="entry name" value="ADH_N"/>
    <property type="match status" value="1"/>
</dbReference>
<dbReference type="Pfam" id="PF00107">
    <property type="entry name" value="ADH_zinc_N"/>
    <property type="match status" value="1"/>
</dbReference>
<dbReference type="SUPFAM" id="SSF50129">
    <property type="entry name" value="GroES-like"/>
    <property type="match status" value="1"/>
</dbReference>
<dbReference type="SUPFAM" id="SSF51735">
    <property type="entry name" value="NAD(P)-binding Rossmann-fold domains"/>
    <property type="match status" value="1"/>
</dbReference>
<name>DOIAD_STRFR</name>
<keyword id="KW-0479">Metal-binding</keyword>
<keyword id="KW-0520">NAD</keyword>
<keyword id="KW-0521">NADP</keyword>
<keyword id="KW-0560">Oxidoreductase</keyword>
<keyword id="KW-0862">Zinc</keyword>
<proteinExistence type="evidence at protein level"/>
<protein>
    <recommendedName>
        <fullName>2-deoxy-scyllo-inosamine dehydrogenase</fullName>
        <shortName>DOIA dehydrogenase</shortName>
        <ecNumber>1.1.1.329</ecNumber>
    </recommendedName>
</protein>
<gene>
    <name type="primary">neoA</name>
    <name type="synonym">nemC</name>
    <name type="synonym">neoE</name>
</gene>
<feature type="chain" id="PRO_0000234043" description="2-deoxy-scyllo-inosamine dehydrogenase">
    <location>
        <begin position="1"/>
        <end position="340"/>
    </location>
</feature>
<feature type="binding site" evidence="1">
    <location>
        <position position="37"/>
    </location>
    <ligand>
        <name>Zn(2+)</name>
        <dbReference type="ChEBI" id="CHEBI:29105"/>
        <label>1</label>
        <note>catalytic</note>
    </ligand>
</feature>
<feature type="binding site" evidence="1">
    <location>
        <position position="59"/>
    </location>
    <ligand>
        <name>Zn(2+)</name>
        <dbReference type="ChEBI" id="CHEBI:29105"/>
        <label>1</label>
        <note>catalytic</note>
    </ligand>
</feature>
<feature type="binding site" evidence="1">
    <location>
        <position position="89"/>
    </location>
    <ligand>
        <name>Zn(2+)</name>
        <dbReference type="ChEBI" id="CHEBI:29105"/>
        <label>2</label>
    </ligand>
</feature>
<feature type="binding site" evidence="1">
    <location>
        <position position="92"/>
    </location>
    <ligand>
        <name>Zn(2+)</name>
        <dbReference type="ChEBI" id="CHEBI:29105"/>
        <label>2</label>
    </ligand>
</feature>
<feature type="binding site" evidence="1">
    <location>
        <position position="95"/>
    </location>
    <ligand>
        <name>Zn(2+)</name>
        <dbReference type="ChEBI" id="CHEBI:29105"/>
        <label>2</label>
    </ligand>
</feature>
<feature type="binding site" evidence="1">
    <location>
        <position position="103"/>
    </location>
    <ligand>
        <name>Zn(2+)</name>
        <dbReference type="ChEBI" id="CHEBI:29105"/>
        <label>2</label>
    </ligand>
</feature>
<feature type="binding site" evidence="1">
    <location>
        <position position="144"/>
    </location>
    <ligand>
        <name>Zn(2+)</name>
        <dbReference type="ChEBI" id="CHEBI:29105"/>
        <label>1</label>
        <note>catalytic</note>
    </ligand>
</feature>
<comment type="function">
    <text evidence="2">Catalyzes the oxidation of 2-deoxy-scyllo-inosamine (DOIA) with NAD(+) or NADP(+), forming 3-amino-2,3-dideoxy-scyllo-inosose (amino-DOI).</text>
</comment>
<comment type="catalytic activity">
    <reaction evidence="2">
        <text>2-deoxy-scyllo-inosamine + NADP(+) = 3-amino-2,3-dideoxy-scyllo-inosose + NADPH + H(+)</text>
        <dbReference type="Rhea" id="RHEA:33879"/>
        <dbReference type="ChEBI" id="CHEBI:15378"/>
        <dbReference type="ChEBI" id="CHEBI:57783"/>
        <dbReference type="ChEBI" id="CHEBI:58349"/>
        <dbReference type="ChEBI" id="CHEBI:65002"/>
        <dbReference type="ChEBI" id="CHEBI:65003"/>
        <dbReference type="EC" id="1.1.1.329"/>
    </reaction>
</comment>
<comment type="catalytic activity">
    <reaction evidence="2">
        <text>2-deoxy-scyllo-inosamine + NAD(+) = 3-amino-2,3-dideoxy-scyllo-inosose + NADH + H(+)</text>
        <dbReference type="Rhea" id="RHEA:33883"/>
        <dbReference type="ChEBI" id="CHEBI:15378"/>
        <dbReference type="ChEBI" id="CHEBI:57540"/>
        <dbReference type="ChEBI" id="CHEBI:57945"/>
        <dbReference type="ChEBI" id="CHEBI:65002"/>
        <dbReference type="ChEBI" id="CHEBI:65003"/>
        <dbReference type="EC" id="1.1.1.329"/>
    </reaction>
</comment>
<comment type="cofactor">
    <cofactor evidence="3">
        <name>Zn(2+)</name>
        <dbReference type="ChEBI" id="CHEBI:29105"/>
    </cofactor>
    <text evidence="3">Binds 2 Zn(2+) ions per subunit.</text>
</comment>
<comment type="pathway">
    <text>Metabolic intermediate biosynthesis; 2-deoxystreptamine biosynthesis; 2-deoxystreptamine from D-glucose 6-phosphate: step 3/4.</text>
</comment>
<comment type="pathway">
    <text>Antibiotic biosynthesis; neomycin biosynthesis.</text>
</comment>
<comment type="similarity">
    <text evidence="3">Belongs to the zinc-containing alcohol dehydrogenase family. DOIA dehydrogenase subfamily.</text>
</comment>